<protein>
    <recommendedName>
        <fullName>Olfactory receptor 1L4</fullName>
    </recommendedName>
    <alternativeName>
        <fullName>OST046</fullName>
    </alternativeName>
    <alternativeName>
        <fullName>Olfactory receptor 1L5</fullName>
    </alternativeName>
    <alternativeName>
        <fullName>Olfactory receptor 9-E</fullName>
        <shortName>OR9-E</shortName>
    </alternativeName>
    <alternativeName>
        <fullName>Olfactory receptor OR9-29</fullName>
    </alternativeName>
</protein>
<proteinExistence type="inferred from homology"/>
<dbReference type="EMBL" id="AB065724">
    <property type="protein sequence ID" value="BAC05945.1"/>
    <property type="molecule type" value="Genomic_DNA"/>
</dbReference>
<dbReference type="EMBL" id="AF399562">
    <property type="protein sequence ID" value="AAK95047.1"/>
    <property type="molecule type" value="Genomic_DNA"/>
</dbReference>
<dbReference type="EMBL" id="BK004232">
    <property type="protein sequence ID" value="DAA04630.1"/>
    <property type="molecule type" value="Genomic_DNA"/>
</dbReference>
<dbReference type="CCDS" id="CCDS35129.1"/>
<dbReference type="RefSeq" id="NP_001005235.1">
    <property type="nucleotide sequence ID" value="NM_001005235.1"/>
</dbReference>
<dbReference type="SMR" id="Q8NGR5"/>
<dbReference type="FunCoup" id="Q8NGR5">
    <property type="interactions" value="466"/>
</dbReference>
<dbReference type="STRING" id="9606.ENSP00000259466"/>
<dbReference type="GlyCosmos" id="Q8NGR5">
    <property type="glycosylation" value="1 site, No reported glycans"/>
</dbReference>
<dbReference type="GlyGen" id="Q8NGR5">
    <property type="glycosylation" value="1 site"/>
</dbReference>
<dbReference type="iPTMnet" id="Q8NGR5"/>
<dbReference type="PhosphoSitePlus" id="Q8NGR5"/>
<dbReference type="BioMuta" id="OR1L4"/>
<dbReference type="DMDM" id="38372755"/>
<dbReference type="MassIVE" id="Q8NGR5"/>
<dbReference type="PaxDb" id="9606-ENSP00000259466"/>
<dbReference type="Antibodypedia" id="72099">
    <property type="antibodies" value="19 antibodies from 13 providers"/>
</dbReference>
<dbReference type="DNASU" id="254973"/>
<dbReference type="Ensembl" id="ENST00000259466.1">
    <property type="protein sequence ID" value="ENSP00000259466.1"/>
    <property type="gene ID" value="ENSG00000136939.1"/>
</dbReference>
<dbReference type="GeneID" id="254973"/>
<dbReference type="KEGG" id="hsa:254973"/>
<dbReference type="MANE-Select" id="ENST00000259466.1">
    <property type="protein sequence ID" value="ENSP00000259466.1"/>
    <property type="RefSeq nucleotide sequence ID" value="NM_001005235.1"/>
    <property type="RefSeq protein sequence ID" value="NP_001005235.1"/>
</dbReference>
<dbReference type="UCSC" id="uc004bmu.1">
    <property type="organism name" value="human"/>
</dbReference>
<dbReference type="AGR" id="HGNC:8216"/>
<dbReference type="CTD" id="254973"/>
<dbReference type="GeneCards" id="OR1L4"/>
<dbReference type="HGNC" id="HGNC:8216">
    <property type="gene designation" value="OR1L4"/>
</dbReference>
<dbReference type="HPA" id="ENSG00000136939">
    <property type="expression patterns" value="Not detected"/>
</dbReference>
<dbReference type="neXtProt" id="NX_Q8NGR5"/>
<dbReference type="OpenTargets" id="ENSG00000136939"/>
<dbReference type="PharmGKB" id="PA32086"/>
<dbReference type="VEuPathDB" id="HostDB:ENSG00000136939"/>
<dbReference type="eggNOG" id="ENOG502RTXQ">
    <property type="taxonomic scope" value="Eukaryota"/>
</dbReference>
<dbReference type="GeneTree" id="ENSGT00940000165463"/>
<dbReference type="HOGENOM" id="CLU_012526_1_3_1"/>
<dbReference type="InParanoid" id="Q8NGR5"/>
<dbReference type="OMA" id="METNNRT"/>
<dbReference type="OrthoDB" id="8772365at2759"/>
<dbReference type="PAN-GO" id="Q8NGR5">
    <property type="GO annotations" value="3 GO annotations based on evolutionary models"/>
</dbReference>
<dbReference type="PhylomeDB" id="Q8NGR5"/>
<dbReference type="TreeFam" id="TF337210"/>
<dbReference type="PathwayCommons" id="Q8NGR5"/>
<dbReference type="Reactome" id="R-HSA-9752946">
    <property type="pathway name" value="Expression and translocation of olfactory receptors"/>
</dbReference>
<dbReference type="BioGRID-ORCS" id="254973">
    <property type="hits" value="9 hits in 740 CRISPR screens"/>
</dbReference>
<dbReference type="GeneWiki" id="OR1L4"/>
<dbReference type="GenomeRNAi" id="254973"/>
<dbReference type="Pharos" id="Q8NGR5">
    <property type="development level" value="Tdark"/>
</dbReference>
<dbReference type="PRO" id="PR:Q8NGR5"/>
<dbReference type="Proteomes" id="UP000005640">
    <property type="component" value="Chromosome 9"/>
</dbReference>
<dbReference type="RNAct" id="Q8NGR5">
    <property type="molecule type" value="protein"/>
</dbReference>
<dbReference type="Bgee" id="ENSG00000136939">
    <property type="expression patterns" value="Expressed in sural nerve and 3 other cell types or tissues"/>
</dbReference>
<dbReference type="GO" id="GO:0005886">
    <property type="term" value="C:plasma membrane"/>
    <property type="evidence" value="ECO:0000318"/>
    <property type="project" value="GO_Central"/>
</dbReference>
<dbReference type="GO" id="GO:0004930">
    <property type="term" value="F:G protein-coupled receptor activity"/>
    <property type="evidence" value="ECO:0007669"/>
    <property type="project" value="UniProtKB-KW"/>
</dbReference>
<dbReference type="GO" id="GO:0004984">
    <property type="term" value="F:olfactory receptor activity"/>
    <property type="evidence" value="ECO:0000318"/>
    <property type="project" value="GO_Central"/>
</dbReference>
<dbReference type="GO" id="GO:0007165">
    <property type="term" value="P:signal transduction"/>
    <property type="evidence" value="ECO:0000318"/>
    <property type="project" value="GO_Central"/>
</dbReference>
<dbReference type="CDD" id="cd15235">
    <property type="entry name" value="7tmA_OR1A-like"/>
    <property type="match status" value="1"/>
</dbReference>
<dbReference type="FunFam" id="1.10.1220.70:FF:000001">
    <property type="entry name" value="Olfactory receptor"/>
    <property type="match status" value="1"/>
</dbReference>
<dbReference type="FunFam" id="1.20.1070.10:FF:000009">
    <property type="entry name" value="Olfactory receptor"/>
    <property type="match status" value="1"/>
</dbReference>
<dbReference type="Gene3D" id="1.20.1070.10">
    <property type="entry name" value="Rhodopsin 7-helix transmembrane proteins"/>
    <property type="match status" value="1"/>
</dbReference>
<dbReference type="InterPro" id="IPR000276">
    <property type="entry name" value="GPCR_Rhodpsn"/>
</dbReference>
<dbReference type="InterPro" id="IPR017452">
    <property type="entry name" value="GPCR_Rhodpsn_7TM"/>
</dbReference>
<dbReference type="InterPro" id="IPR000725">
    <property type="entry name" value="Olfact_rcpt"/>
</dbReference>
<dbReference type="PANTHER" id="PTHR48001">
    <property type="entry name" value="OLFACTORY RECEPTOR"/>
    <property type="match status" value="1"/>
</dbReference>
<dbReference type="Pfam" id="PF13853">
    <property type="entry name" value="7tm_4"/>
    <property type="match status" value="1"/>
</dbReference>
<dbReference type="PRINTS" id="PR00237">
    <property type="entry name" value="GPCRRHODOPSN"/>
</dbReference>
<dbReference type="PRINTS" id="PR00245">
    <property type="entry name" value="OLFACTORYR"/>
</dbReference>
<dbReference type="SUPFAM" id="SSF81321">
    <property type="entry name" value="Family A G protein-coupled receptor-like"/>
    <property type="match status" value="1"/>
</dbReference>
<dbReference type="PROSITE" id="PS50262">
    <property type="entry name" value="G_PROTEIN_RECEP_F1_2"/>
    <property type="match status" value="1"/>
</dbReference>
<comment type="function">
    <text evidence="4">Odorant receptor.</text>
</comment>
<comment type="subcellular location">
    <subcellularLocation>
        <location>Cell membrane</location>
        <topology>Multi-pass membrane protein</topology>
    </subcellularLocation>
</comment>
<comment type="similarity">
    <text evidence="2">Belongs to the G-protein coupled receptor 1 family.</text>
</comment>
<comment type="online information" name="Human Olfactory Receptor Data Exploratorium (HORDE)">
    <link uri="http://genome.weizmann.ac.il/horde/card/index/symbol:OR1L4"/>
</comment>
<keyword id="KW-1003">Cell membrane</keyword>
<keyword id="KW-1015">Disulfide bond</keyword>
<keyword id="KW-0297">G-protein coupled receptor</keyword>
<keyword id="KW-0325">Glycoprotein</keyword>
<keyword id="KW-0472">Membrane</keyword>
<keyword id="KW-0552">Olfaction</keyword>
<keyword id="KW-0675">Receptor</keyword>
<keyword id="KW-1185">Reference proteome</keyword>
<keyword id="KW-0716">Sensory transduction</keyword>
<keyword id="KW-0807">Transducer</keyword>
<keyword id="KW-0812">Transmembrane</keyword>
<keyword id="KW-1133">Transmembrane helix</keyword>
<reference key="1">
    <citation type="submission" date="2001-07" db="EMBL/GenBank/DDBJ databases">
        <title>Genome-wide discovery and analysis of human seven transmembrane helix receptor genes.</title>
        <authorList>
            <person name="Suwa M."/>
            <person name="Sato T."/>
            <person name="Okouchi I."/>
            <person name="Arita M."/>
            <person name="Futami K."/>
            <person name="Matsumoto S."/>
            <person name="Tsutsumi S."/>
            <person name="Aburatani H."/>
            <person name="Asai K."/>
            <person name="Akiyama Y."/>
        </authorList>
    </citation>
    <scope>NUCLEOTIDE SEQUENCE [GENOMIC DNA]</scope>
</reference>
<reference key="2">
    <citation type="journal article" date="2002" name="Genomics">
        <title>DEFOG: a practical scheme for deciphering families of genes.</title>
        <authorList>
            <person name="Fuchs T."/>
            <person name="Malecova B."/>
            <person name="Linhart C."/>
            <person name="Sharan R."/>
            <person name="Khen M."/>
            <person name="Herwig R."/>
            <person name="Shmulevich D."/>
            <person name="Elkon R."/>
            <person name="Steinfath M."/>
            <person name="O'Brien J.K."/>
            <person name="Radelof U."/>
            <person name="Lehrach H."/>
            <person name="Lancet D."/>
            <person name="Shamir R."/>
        </authorList>
    </citation>
    <scope>NUCLEOTIDE SEQUENCE [GENOMIC DNA] OF 69-284</scope>
    <scope>VARIANT ARG-234</scope>
</reference>
<reference key="3">
    <citation type="journal article" date="2004" name="Proc. Natl. Acad. Sci. U.S.A.">
        <title>The human olfactory receptor gene family.</title>
        <authorList>
            <person name="Malnic B."/>
            <person name="Godfrey P.A."/>
            <person name="Buck L.B."/>
        </authorList>
    </citation>
    <scope>IDENTIFICATION</scope>
</reference>
<reference key="4">
    <citation type="journal article" date="2004" name="Proc. Natl. Acad. Sci. U.S.A.">
        <authorList>
            <person name="Malnic B."/>
            <person name="Godfrey P.A."/>
            <person name="Buck L.B."/>
        </authorList>
    </citation>
    <scope>ERRATUM OF PUBMED:14983052</scope>
</reference>
<sequence length="311" mass="35277">METKNYSSSTSGFILLGLSSNPKLQKPLFAIFLIMYLLTAVGNVLIILAIYSDPRLHTPMYFFLSNLSFMDICFTTVIVPKMLVNFLSETKIISYVGCLIQMYFFMAFGNTDSYLLASMAIDRLVAICNPLHYDVVMKPWHCLLMLLGSCSISHLHSLFRVLLMSRLSFCASHIIKHFFCDTQPVLKLSCSDTSSSQMVVMTETLAVIVTPFLCTIFSYLQIIVTVLRIPSAAGKWKAFSTCGSHLTVVVLFYGSVIYVYFRPLSMYSVMKGRVATVMYTVVTPMLNPFIYSLRNKDMKRGLKKLRHRIYS</sequence>
<accession>Q8NGR5</accession>
<accession>Q6IFN0</accession>
<accession>Q96R81</accession>
<evidence type="ECO:0000255" key="1"/>
<evidence type="ECO:0000255" key="2">
    <source>
        <dbReference type="PROSITE-ProRule" id="PRU00521"/>
    </source>
</evidence>
<evidence type="ECO:0000269" key="3">
    <source>
    </source>
</evidence>
<evidence type="ECO:0000305" key="4"/>
<organism>
    <name type="scientific">Homo sapiens</name>
    <name type="common">Human</name>
    <dbReference type="NCBI Taxonomy" id="9606"/>
    <lineage>
        <taxon>Eukaryota</taxon>
        <taxon>Metazoa</taxon>
        <taxon>Chordata</taxon>
        <taxon>Craniata</taxon>
        <taxon>Vertebrata</taxon>
        <taxon>Euteleostomi</taxon>
        <taxon>Mammalia</taxon>
        <taxon>Eutheria</taxon>
        <taxon>Euarchontoglires</taxon>
        <taxon>Primates</taxon>
        <taxon>Haplorrhini</taxon>
        <taxon>Catarrhini</taxon>
        <taxon>Hominidae</taxon>
        <taxon>Homo</taxon>
    </lineage>
</organism>
<name>OR1L4_HUMAN</name>
<feature type="chain" id="PRO_0000150444" description="Olfactory receptor 1L4">
    <location>
        <begin position="1"/>
        <end position="311"/>
    </location>
</feature>
<feature type="topological domain" description="Extracellular" evidence="1">
    <location>
        <begin position="1"/>
        <end position="26"/>
    </location>
</feature>
<feature type="transmembrane region" description="Helical; Name=1" evidence="1">
    <location>
        <begin position="27"/>
        <end position="50"/>
    </location>
</feature>
<feature type="topological domain" description="Cytoplasmic" evidence="1">
    <location>
        <begin position="51"/>
        <end position="58"/>
    </location>
</feature>
<feature type="transmembrane region" description="Helical; Name=2" evidence="1">
    <location>
        <begin position="59"/>
        <end position="80"/>
    </location>
</feature>
<feature type="topological domain" description="Extracellular" evidence="1">
    <location>
        <begin position="81"/>
        <end position="101"/>
    </location>
</feature>
<feature type="transmembrane region" description="Helical; Name=3" evidence="1">
    <location>
        <begin position="102"/>
        <end position="121"/>
    </location>
</feature>
<feature type="topological domain" description="Cytoplasmic" evidence="1">
    <location>
        <begin position="122"/>
        <end position="140"/>
    </location>
</feature>
<feature type="transmembrane region" description="Helical; Name=4" evidence="1">
    <location>
        <begin position="141"/>
        <end position="159"/>
    </location>
</feature>
<feature type="topological domain" description="Extracellular" evidence="1">
    <location>
        <begin position="160"/>
        <end position="197"/>
    </location>
</feature>
<feature type="transmembrane region" description="Helical; Name=5" evidence="1">
    <location>
        <begin position="198"/>
        <end position="220"/>
    </location>
</feature>
<feature type="topological domain" description="Cytoplasmic" evidence="1">
    <location>
        <begin position="221"/>
        <end position="237"/>
    </location>
</feature>
<feature type="transmembrane region" description="Helical; Name=6" evidence="1">
    <location>
        <begin position="238"/>
        <end position="260"/>
    </location>
</feature>
<feature type="topological domain" description="Extracellular" evidence="1">
    <location>
        <begin position="261"/>
        <end position="273"/>
    </location>
</feature>
<feature type="transmembrane region" description="Helical; Name=7" evidence="1">
    <location>
        <begin position="274"/>
        <end position="293"/>
    </location>
</feature>
<feature type="topological domain" description="Cytoplasmic" evidence="1">
    <location>
        <begin position="294"/>
        <end position="311"/>
    </location>
</feature>
<feature type="glycosylation site" description="N-linked (GlcNAc...) asparagine" evidence="1">
    <location>
        <position position="5"/>
    </location>
</feature>
<feature type="disulfide bond" evidence="2">
    <location>
        <begin position="98"/>
        <end position="190"/>
    </location>
</feature>
<feature type="sequence variant" id="VAR_053124" description="In dbSNP:rs2215530." evidence="3">
    <original>G</original>
    <variation>R</variation>
    <location>
        <position position="234"/>
    </location>
</feature>
<feature type="sequence variant" id="VAR_053125" description="In dbSNP:rs12341025.">
    <original>Y</original>
    <variation>H</variation>
    <location>
        <position position="310"/>
    </location>
</feature>
<gene>
    <name type="primary">OR1L4</name>
    <name type="synonym">OR1L5</name>
</gene>